<protein>
    <recommendedName>
        <fullName evidence="4 5">Putative acyl-[acyl-carrier-protein] desaturase DesA2</fullName>
        <shortName evidence="4">Putative acyl-ACP desaturase DesA2</shortName>
        <ecNumber evidence="7">1.14.19.-</ecNumber>
    </recommendedName>
</protein>
<gene>
    <name evidence="4" type="primary">desA2</name>
    <name type="ordered locus">Rv1094</name>
</gene>
<evidence type="ECO:0000250" key="1">
    <source>
        <dbReference type="UniProtKB" id="P22337"/>
    </source>
</evidence>
<evidence type="ECO:0000269" key="2">
    <source>
    </source>
</evidence>
<evidence type="ECO:0000269" key="3">
    <source>
    </source>
</evidence>
<evidence type="ECO:0000303" key="4">
    <source>
    </source>
</evidence>
<evidence type="ECO:0000303" key="5">
    <source>
    </source>
</evidence>
<evidence type="ECO:0000305" key="6"/>
<evidence type="ECO:0000305" key="7">
    <source>
    </source>
</evidence>
<evidence type="ECO:0000305" key="8">
    <source>
    </source>
</evidence>
<evidence type="ECO:0000305" key="9">
    <source>
    </source>
</evidence>
<evidence type="ECO:0007744" key="10">
    <source>
    </source>
</evidence>
<evidence type="ECO:0007829" key="11">
    <source>
        <dbReference type="PDB" id="1ZA0"/>
    </source>
</evidence>
<proteinExistence type="evidence at protein level"/>
<name>DESA2_MYCTU</name>
<dbReference type="EC" id="1.14.19.-" evidence="7"/>
<dbReference type="EMBL" id="AL123456">
    <property type="protein sequence ID" value="CCP43847.1"/>
    <property type="molecule type" value="Genomic_DNA"/>
</dbReference>
<dbReference type="PIR" id="D70896">
    <property type="entry name" value="D70896"/>
</dbReference>
<dbReference type="RefSeq" id="NP_215610.1">
    <property type="nucleotide sequence ID" value="NC_000962.3"/>
</dbReference>
<dbReference type="RefSeq" id="WP_003405801.1">
    <property type="nucleotide sequence ID" value="NZ_NVQJ01000021.1"/>
</dbReference>
<dbReference type="PDB" id="1ZA0">
    <property type="method" value="X-ray"/>
    <property type="resolution" value="2.00 A"/>
    <property type="chains" value="A=1-275"/>
</dbReference>
<dbReference type="PDBsum" id="1ZA0"/>
<dbReference type="SMR" id="P9WNZ5"/>
<dbReference type="FunCoup" id="P9WNZ5">
    <property type="interactions" value="53"/>
</dbReference>
<dbReference type="STRING" id="83332.Rv1094"/>
<dbReference type="iPTMnet" id="P9WNZ5"/>
<dbReference type="PaxDb" id="83332-Rv1094"/>
<dbReference type="DNASU" id="885339"/>
<dbReference type="GeneID" id="885339"/>
<dbReference type="KEGG" id="mtu:Rv1094"/>
<dbReference type="KEGG" id="mtv:RVBD_1094"/>
<dbReference type="TubercuList" id="Rv1094"/>
<dbReference type="eggNOG" id="COG0208">
    <property type="taxonomic scope" value="Bacteria"/>
</dbReference>
<dbReference type="InParanoid" id="P9WNZ5"/>
<dbReference type="OrthoDB" id="9772881at2"/>
<dbReference type="PhylomeDB" id="P9WNZ5"/>
<dbReference type="BRENDA" id="1.14.19.2">
    <property type="organism ID" value="3445"/>
</dbReference>
<dbReference type="UniPathway" id="UPA00199"/>
<dbReference type="EvolutionaryTrace" id="P9WNZ5"/>
<dbReference type="Proteomes" id="UP000001584">
    <property type="component" value="Chromosome"/>
</dbReference>
<dbReference type="GO" id="GO:0005829">
    <property type="term" value="C:cytosol"/>
    <property type="evidence" value="ECO:0007005"/>
    <property type="project" value="MTBBASE"/>
</dbReference>
<dbReference type="GO" id="GO:0009274">
    <property type="term" value="C:peptidoglycan-based cell wall"/>
    <property type="evidence" value="ECO:0007005"/>
    <property type="project" value="MTBBASE"/>
</dbReference>
<dbReference type="GO" id="GO:0005886">
    <property type="term" value="C:plasma membrane"/>
    <property type="evidence" value="ECO:0007005"/>
    <property type="project" value="MTBBASE"/>
</dbReference>
<dbReference type="GO" id="GO:0046872">
    <property type="term" value="F:metal ion binding"/>
    <property type="evidence" value="ECO:0000314"/>
    <property type="project" value="MTBBASE"/>
</dbReference>
<dbReference type="GO" id="GO:0045300">
    <property type="term" value="F:stearoyl-[ACP] desaturase activity"/>
    <property type="evidence" value="ECO:0007669"/>
    <property type="project" value="InterPro"/>
</dbReference>
<dbReference type="GO" id="GO:0006633">
    <property type="term" value="P:fatty acid biosynthetic process"/>
    <property type="evidence" value="ECO:0007669"/>
    <property type="project" value="UniProtKB-KW"/>
</dbReference>
<dbReference type="Gene3D" id="1.10.620.20">
    <property type="entry name" value="Ribonucleotide Reductase, subunit A"/>
    <property type="match status" value="1"/>
</dbReference>
<dbReference type="InterPro" id="IPR005067">
    <property type="entry name" value="Fatty_acid_desaturase-2"/>
</dbReference>
<dbReference type="InterPro" id="IPR009078">
    <property type="entry name" value="Ferritin-like_SF"/>
</dbReference>
<dbReference type="InterPro" id="IPR012348">
    <property type="entry name" value="RNR-like"/>
</dbReference>
<dbReference type="PANTHER" id="PTHR31155">
    <property type="entry name" value="ACYL- ACYL-CARRIER-PROTEIN DESATURASE-RELATED"/>
    <property type="match status" value="1"/>
</dbReference>
<dbReference type="PANTHER" id="PTHR31155:SF9">
    <property type="entry name" value="STEAROYL-[ACYL-CARRIER-PROTEIN] 9-DESATURASE 7, CHLOROPLASTIC"/>
    <property type="match status" value="1"/>
</dbReference>
<dbReference type="Pfam" id="PF03405">
    <property type="entry name" value="FA_desaturase_2"/>
    <property type="match status" value="1"/>
</dbReference>
<dbReference type="PIRSF" id="PIRSF000346">
    <property type="entry name" value="Dlt9_acylACP_des"/>
    <property type="match status" value="1"/>
</dbReference>
<dbReference type="SUPFAM" id="SSF47240">
    <property type="entry name" value="Ferritin-like"/>
    <property type="match status" value="1"/>
</dbReference>
<sequence>MAQKPVADALTLELEPVVEANMTRHLDTEDIWFAHDYVPFDQGENFAFLGGRDWDPSQSTLPRTITDACEILLILKDNLAGHHRELVEHFILEDWWGRWLGRWTAEEHLHAIALREYLVVTREVDPVANEDVRVQHVMKGYRAEKYTQVETLVYMAFYERCGAVFCRNLAAQIEEPILAGLIDRIARDEVRHEEFFANLVTHCLDYTRDETIAAIAARAADLDVLGADIEAYRDKLQNVADAGIFGKPQLRQLISDRITAWGLAGEPSLKQFVTG</sequence>
<reference key="1">
    <citation type="journal article" date="1998" name="Nature">
        <title>Deciphering the biology of Mycobacterium tuberculosis from the complete genome sequence.</title>
        <authorList>
            <person name="Cole S.T."/>
            <person name="Brosch R."/>
            <person name="Parkhill J."/>
            <person name="Garnier T."/>
            <person name="Churcher C.M."/>
            <person name="Harris D.E."/>
            <person name="Gordon S.V."/>
            <person name="Eiglmeier K."/>
            <person name="Gas S."/>
            <person name="Barry C.E. III"/>
            <person name="Tekaia F."/>
            <person name="Badcock K."/>
            <person name="Basham D."/>
            <person name="Brown D."/>
            <person name="Chillingworth T."/>
            <person name="Connor R."/>
            <person name="Davies R.M."/>
            <person name="Devlin K."/>
            <person name="Feltwell T."/>
            <person name="Gentles S."/>
            <person name="Hamlin N."/>
            <person name="Holroyd S."/>
            <person name="Hornsby T."/>
            <person name="Jagels K."/>
            <person name="Krogh A."/>
            <person name="McLean J."/>
            <person name="Moule S."/>
            <person name="Murphy L.D."/>
            <person name="Oliver S."/>
            <person name="Osborne J."/>
            <person name="Quail M.A."/>
            <person name="Rajandream M.A."/>
            <person name="Rogers J."/>
            <person name="Rutter S."/>
            <person name="Seeger K."/>
            <person name="Skelton S."/>
            <person name="Squares S."/>
            <person name="Squares R."/>
            <person name="Sulston J.E."/>
            <person name="Taylor K."/>
            <person name="Whitehead S."/>
            <person name="Barrell B.G."/>
        </authorList>
    </citation>
    <scope>NUCLEOTIDE SEQUENCE [LARGE SCALE GENOMIC DNA]</scope>
    <source>
        <strain>ATCC 25618 / H37Rv</strain>
    </source>
</reference>
<reference key="2">
    <citation type="journal article" date="2003" name="J. Biol. Chem.">
        <title>Unique mechanism of action of the thiourea drug isoxyl on Mycobacterium tuberculosis.</title>
        <authorList>
            <person name="Phetsuksiri B."/>
            <person name="Jackson M."/>
            <person name="Scherman H."/>
            <person name="McNeil M."/>
            <person name="Besra G.S."/>
            <person name="Baulard A.R."/>
            <person name="Slayden R.A."/>
            <person name="DeBarber A.E."/>
            <person name="Barry C.E. III"/>
            <person name="Baird M.S."/>
            <person name="Crick D.C."/>
            <person name="Brennan P.J."/>
        </authorList>
    </citation>
    <scope>PUTATIVE FUNCTION</scope>
    <source>
        <strain>ATCC 25618 / H37Rv</strain>
    </source>
</reference>
<reference key="3">
    <citation type="journal article" date="2008" name="BMC Syst. Biol.">
        <title>targetTB: a target identification pipeline for Mycobacterium tuberculosis through an interactome, reactome and genome-scale structural analysis.</title>
        <authorList>
            <person name="Raman K."/>
            <person name="Yeturu K."/>
            <person name="Chandra N."/>
        </authorList>
    </citation>
    <scope>IDENTIFICATION AS A DRUG TARGET [LARGE SCALE ANALYSIS]</scope>
</reference>
<reference key="4">
    <citation type="journal article" date="2010" name="PLoS ONE">
        <title>Prokaryotic ubiquitin-like protein (Pup) proteome of Mycobacterium tuberculosis.</title>
        <authorList>
            <person name="Festa R.A."/>
            <person name="McAllister F."/>
            <person name="Pearce M.J."/>
            <person name="Mintseris J."/>
            <person name="Burns K.E."/>
            <person name="Gygi S.P."/>
            <person name="Darwin K.H."/>
        </authorList>
    </citation>
    <scope>PUPYLATION AT LYS-145</scope>
    <scope>IDENTIFICATION BY MASS SPECTROMETRY</scope>
    <source>
        <strain>ATCC 25618 / H37Rv</strain>
    </source>
</reference>
<reference key="5">
    <citation type="journal article" date="2011" name="Mol. Cell. Proteomics">
        <title>Proteogenomic analysis of Mycobacterium tuberculosis by high resolution mass spectrometry.</title>
        <authorList>
            <person name="Kelkar D.S."/>
            <person name="Kumar D."/>
            <person name="Kumar P."/>
            <person name="Balakrishnan L."/>
            <person name="Muthusamy B."/>
            <person name="Yadav A.K."/>
            <person name="Shrivastava P."/>
            <person name="Marimuthu A."/>
            <person name="Anand S."/>
            <person name="Sundaram H."/>
            <person name="Kingsbury R."/>
            <person name="Harsha H.C."/>
            <person name="Nair B."/>
            <person name="Prasad T.S."/>
            <person name="Chauhan D.S."/>
            <person name="Katoch K."/>
            <person name="Katoch V.M."/>
            <person name="Kumar P."/>
            <person name="Chaerkady R."/>
            <person name="Ramachandran S."/>
            <person name="Dash D."/>
            <person name="Pandey A."/>
        </authorList>
    </citation>
    <scope>ACETYLATION [LARGE SCALE ANALYSIS] AT ALA-2</scope>
    <scope>CLEAVAGE OF INITIATOR METHIONINE [LARGE SCALE ANALYSIS]</scope>
    <scope>IDENTIFICATION BY MASS SPECTROMETRY [LARGE SCALE ANALYSIS]</scope>
    <source>
        <strain>ATCC 25618 / H37Rv</strain>
    </source>
</reference>
<reference key="6">
    <citation type="journal article" date="2005" name="Protein Sci.">
        <title>X-ray structure of putative acyl-ACP desaturase DesA2 from Mycobacterium tuberculosis H37Rv.</title>
        <authorList>
            <person name="Dyer D.H."/>
            <person name="Lyle K.S."/>
            <person name="Rayment I."/>
            <person name="Fox B.G."/>
        </authorList>
    </citation>
    <scope>X-RAY CRYSTALLOGRAPHY (2.0 ANGSTROMS) IN COMPLEX WITH MANGANESE</scope>
    <scope>SUBUNIT</scope>
    <source>
        <strain>H37Rv</strain>
    </source>
</reference>
<feature type="initiator methionine" description="Removed" evidence="10">
    <location>
        <position position="1"/>
    </location>
</feature>
<feature type="chain" id="PRO_0000392676" description="Putative acyl-[acyl-carrier-protein] desaturase DesA2">
    <location>
        <begin position="2"/>
        <end position="275"/>
    </location>
</feature>
<feature type="binding site" evidence="1 8">
    <location>
        <position position="107"/>
    </location>
    <ligand>
        <name>Fe cation</name>
        <dbReference type="ChEBI" id="CHEBI:24875"/>
        <label>1</label>
    </ligand>
</feature>
<feature type="binding site" evidence="1 8">
    <location>
        <position position="107"/>
    </location>
    <ligand>
        <name>Fe cation</name>
        <dbReference type="ChEBI" id="CHEBI:24875"/>
        <label>2</label>
    </ligand>
</feature>
<feature type="binding site" evidence="1">
    <location>
        <position position="110"/>
    </location>
    <ligand>
        <name>Fe cation</name>
        <dbReference type="ChEBI" id="CHEBI:24875"/>
        <label>1</label>
    </ligand>
</feature>
<feature type="binding site" evidence="1 8">
    <location>
        <position position="159"/>
    </location>
    <ligand>
        <name>Fe cation</name>
        <dbReference type="ChEBI" id="CHEBI:24875"/>
        <label>2</label>
    </ligand>
</feature>
<feature type="binding site" evidence="1 8">
    <location>
        <position position="189"/>
    </location>
    <ligand>
        <name>Fe cation</name>
        <dbReference type="ChEBI" id="CHEBI:24875"/>
        <label>1</label>
    </ligand>
</feature>
<feature type="binding site" evidence="1 8">
    <location>
        <position position="189"/>
    </location>
    <ligand>
        <name>Fe cation</name>
        <dbReference type="ChEBI" id="CHEBI:24875"/>
        <label>2</label>
    </ligand>
</feature>
<feature type="binding site" evidence="1 8">
    <location>
        <position position="192"/>
    </location>
    <ligand>
        <name>Fe cation</name>
        <dbReference type="ChEBI" id="CHEBI:24875"/>
        <label>2</label>
    </ligand>
</feature>
<feature type="modified residue" description="N-acetylalanine" evidence="10">
    <location>
        <position position="2"/>
    </location>
</feature>
<feature type="cross-link" description="Isoglutamyl lysine isopeptide (Lys-Gln) (interchain with Q-Cter in protein Pup)" evidence="3">
    <location>
        <position position="145"/>
    </location>
</feature>
<feature type="helix" evidence="11">
    <location>
        <begin position="9"/>
        <end position="27"/>
    </location>
</feature>
<feature type="helix" evidence="11">
    <location>
        <begin position="34"/>
        <end position="37"/>
    </location>
</feature>
<feature type="helix" evidence="11">
    <location>
        <begin position="40"/>
        <end position="42"/>
    </location>
</feature>
<feature type="helix" evidence="11">
    <location>
        <begin position="47"/>
        <end position="49"/>
    </location>
</feature>
<feature type="helix" evidence="11">
    <location>
        <begin position="56"/>
        <end position="58"/>
    </location>
</feature>
<feature type="helix" evidence="11">
    <location>
        <begin position="63"/>
        <end position="77"/>
    </location>
</feature>
<feature type="helix" evidence="11">
    <location>
        <begin position="95"/>
        <end position="120"/>
    </location>
</feature>
<feature type="turn" evidence="11">
    <location>
        <begin position="126"/>
        <end position="130"/>
    </location>
</feature>
<feature type="helix" evidence="11">
    <location>
        <begin position="148"/>
        <end position="172"/>
    </location>
</feature>
<feature type="helix" evidence="11">
    <location>
        <begin position="176"/>
        <end position="206"/>
    </location>
</feature>
<feature type="helix" evidence="11">
    <location>
        <begin position="208"/>
        <end position="221"/>
    </location>
</feature>
<feature type="turn" evidence="11">
    <location>
        <begin position="225"/>
        <end position="228"/>
    </location>
</feature>
<feature type="helix" evidence="11">
    <location>
        <begin position="233"/>
        <end position="241"/>
    </location>
</feature>
<feature type="strand" evidence="11">
    <location>
        <begin position="244"/>
        <end position="246"/>
    </location>
</feature>
<feature type="helix" evidence="11">
    <location>
        <begin position="247"/>
        <end position="260"/>
    </location>
</feature>
<feature type="helix" evidence="11">
    <location>
        <begin position="267"/>
        <end position="272"/>
    </location>
</feature>
<accession>P9WNZ5</accession>
<accession>L0T8L4</accession>
<accession>O53442</accession>
<accession>Q7D8V3</accession>
<keyword id="KW-0002">3D-structure</keyword>
<keyword id="KW-0007">Acetylation</keyword>
<keyword id="KW-0275">Fatty acid biosynthesis</keyword>
<keyword id="KW-0276">Fatty acid metabolism</keyword>
<keyword id="KW-0408">Iron</keyword>
<keyword id="KW-1017">Isopeptide bond</keyword>
<keyword id="KW-0444">Lipid biosynthesis</keyword>
<keyword id="KW-0443">Lipid metabolism</keyword>
<keyword id="KW-0479">Metal-binding</keyword>
<keyword id="KW-0560">Oxidoreductase</keyword>
<keyword id="KW-1185">Reference proteome</keyword>
<keyword id="KW-0832">Ubl conjugation</keyword>
<comment type="function">
    <text evidence="7">May be a desaturase involved in mycobacterial fatty acid biosynthesis.</text>
</comment>
<comment type="cofactor">
    <cofactor evidence="1">
        <name>Fe(2+)</name>
        <dbReference type="ChEBI" id="CHEBI:29033"/>
    </cofactor>
    <text evidence="1">Binds 2 Fe(2+) ions per subunit.</text>
</comment>
<comment type="pathway">
    <text evidence="7">Lipid metabolism; fatty acid metabolism.</text>
</comment>
<comment type="subunit">
    <text evidence="2">Homodimer.</text>
</comment>
<comment type="miscellaneous">
    <text evidence="9">Was identified as a high-confidence drug target.</text>
</comment>
<comment type="similarity">
    <text evidence="6">Belongs to the fatty acid desaturase type 2 family.</text>
</comment>
<organism>
    <name type="scientific">Mycobacterium tuberculosis (strain ATCC 25618 / H37Rv)</name>
    <dbReference type="NCBI Taxonomy" id="83332"/>
    <lineage>
        <taxon>Bacteria</taxon>
        <taxon>Bacillati</taxon>
        <taxon>Actinomycetota</taxon>
        <taxon>Actinomycetes</taxon>
        <taxon>Mycobacteriales</taxon>
        <taxon>Mycobacteriaceae</taxon>
        <taxon>Mycobacterium</taxon>
        <taxon>Mycobacterium tuberculosis complex</taxon>
    </lineage>
</organism>